<reference key="1">
    <citation type="submission" date="2006-01" db="EMBL/GenBank/DDBJ databases">
        <title>Complete sequence of Anaeromyxobacter dehalogenans 2CP-C.</title>
        <authorList>
            <person name="Copeland A."/>
            <person name="Lucas S."/>
            <person name="Lapidus A."/>
            <person name="Barry K."/>
            <person name="Detter J.C."/>
            <person name="Glavina T."/>
            <person name="Hammon N."/>
            <person name="Israni S."/>
            <person name="Pitluck S."/>
            <person name="Brettin T."/>
            <person name="Bruce D."/>
            <person name="Han C."/>
            <person name="Tapia R."/>
            <person name="Gilna P."/>
            <person name="Kiss H."/>
            <person name="Schmutz J."/>
            <person name="Larimer F."/>
            <person name="Land M."/>
            <person name="Kyrpides N."/>
            <person name="Anderson I."/>
            <person name="Sanford R.A."/>
            <person name="Ritalahti K.M."/>
            <person name="Thomas H.S."/>
            <person name="Kirby J.R."/>
            <person name="Zhulin I.B."/>
            <person name="Loeffler F.E."/>
            <person name="Richardson P."/>
        </authorList>
    </citation>
    <scope>NUCLEOTIDE SEQUENCE [LARGE SCALE GENOMIC DNA]</scope>
    <source>
        <strain>2CP-C</strain>
    </source>
</reference>
<gene>
    <name evidence="1" type="primary">pgi</name>
    <name type="ordered locus">Adeh_3080</name>
</gene>
<evidence type="ECO:0000255" key="1">
    <source>
        <dbReference type="HAMAP-Rule" id="MF_00473"/>
    </source>
</evidence>
<organism>
    <name type="scientific">Anaeromyxobacter dehalogenans (strain 2CP-C)</name>
    <dbReference type="NCBI Taxonomy" id="290397"/>
    <lineage>
        <taxon>Bacteria</taxon>
        <taxon>Pseudomonadati</taxon>
        <taxon>Myxococcota</taxon>
        <taxon>Myxococcia</taxon>
        <taxon>Myxococcales</taxon>
        <taxon>Cystobacterineae</taxon>
        <taxon>Anaeromyxobacteraceae</taxon>
        <taxon>Anaeromyxobacter</taxon>
    </lineage>
</organism>
<keyword id="KW-0963">Cytoplasm</keyword>
<keyword id="KW-0312">Gluconeogenesis</keyword>
<keyword id="KW-0324">Glycolysis</keyword>
<keyword id="KW-0413">Isomerase</keyword>
<keyword id="KW-1185">Reference proteome</keyword>
<feature type="chain" id="PRO_0000252607" description="Glucose-6-phosphate isomerase">
    <location>
        <begin position="1"/>
        <end position="550"/>
    </location>
</feature>
<feature type="active site" description="Proton donor" evidence="1">
    <location>
        <position position="357"/>
    </location>
</feature>
<feature type="active site" evidence="1">
    <location>
        <position position="389"/>
    </location>
</feature>
<feature type="active site" evidence="1">
    <location>
        <position position="509"/>
    </location>
</feature>
<comment type="function">
    <text evidence="1">Catalyzes the reversible isomerization of glucose-6-phosphate to fructose-6-phosphate.</text>
</comment>
<comment type="catalytic activity">
    <reaction evidence="1">
        <text>alpha-D-glucose 6-phosphate = beta-D-fructose 6-phosphate</text>
        <dbReference type="Rhea" id="RHEA:11816"/>
        <dbReference type="ChEBI" id="CHEBI:57634"/>
        <dbReference type="ChEBI" id="CHEBI:58225"/>
        <dbReference type="EC" id="5.3.1.9"/>
    </reaction>
</comment>
<comment type="pathway">
    <text evidence="1">Carbohydrate biosynthesis; gluconeogenesis.</text>
</comment>
<comment type="pathway">
    <text evidence="1">Carbohydrate degradation; glycolysis; D-glyceraldehyde 3-phosphate and glycerone phosphate from D-glucose: step 2/4.</text>
</comment>
<comment type="subcellular location">
    <subcellularLocation>
        <location evidence="1">Cytoplasm</location>
    </subcellularLocation>
</comment>
<comment type="similarity">
    <text evidence="1">Belongs to the GPI family.</text>
</comment>
<protein>
    <recommendedName>
        <fullName evidence="1">Glucose-6-phosphate isomerase</fullName>
        <shortName evidence="1">GPI</shortName>
        <ecNumber evidence="1">5.3.1.9</ecNumber>
    </recommendedName>
    <alternativeName>
        <fullName evidence="1">Phosphoglucose isomerase</fullName>
        <shortName evidence="1">PGI</shortName>
    </alternativeName>
    <alternativeName>
        <fullName evidence="1">Phosphohexose isomerase</fullName>
        <shortName evidence="1">PHI</shortName>
    </alternativeName>
</protein>
<sequence>MADRNDPLLRTPAWRALETHLAEVRPLHLRELFARDPGRGDRLAAEGAGLYLDYSKQRVTEETVRLLVALAEARGLPGRRAAMFRGEKVNATEGRAALHVALRAPRGERIEVDGKDVVPEVHAVLDRMAAFAEQVRSGAWTGFTGRRIRTVVNVGIGGSDLGPAMAYRALRAYTTREIAFRFVSNVDGTDLAEAVRDLDPAETLFLVASKTFTTLETMTNAASARAWLLAALGDERAVARHFVAISTNEAEVRRFGIDPANMFGFWDWVGGRYSMDSAIGLSTMIAVGPGGFRELLAGFRAMDEHFRDAPLERNLPALVGLIGVWNASLLGAETVAVLPYDQYLDRFPAYLQQLTMESNGKRVTASGAPVEGHGTGAIYWGEPGTNGQHSFYQLLHQGTHLVACDFIGFCRTLNPLGRHHDLLMANLFAQGEALAFGKTAEEARAEGTPEALVPHRTFPGNRPSSTILADRLGPGTLGALVALYEHAVFTQGVIWDVDSFDQWGVELGKVLANRIVKELEAPADPALAHDGSTNALIRRYRARRGGSASS</sequence>
<dbReference type="EC" id="5.3.1.9" evidence="1"/>
<dbReference type="EMBL" id="CP000251">
    <property type="protein sequence ID" value="ABC82849.1"/>
    <property type="molecule type" value="Genomic_DNA"/>
</dbReference>
<dbReference type="RefSeq" id="WP_011422131.1">
    <property type="nucleotide sequence ID" value="NC_007760.1"/>
</dbReference>
<dbReference type="SMR" id="Q2IE39"/>
<dbReference type="STRING" id="290397.Adeh_3080"/>
<dbReference type="KEGG" id="ade:Adeh_3080"/>
<dbReference type="eggNOG" id="COG0166">
    <property type="taxonomic scope" value="Bacteria"/>
</dbReference>
<dbReference type="HOGENOM" id="CLU_017947_3_1_7"/>
<dbReference type="OrthoDB" id="140919at2"/>
<dbReference type="UniPathway" id="UPA00109">
    <property type="reaction ID" value="UER00181"/>
</dbReference>
<dbReference type="UniPathway" id="UPA00138"/>
<dbReference type="Proteomes" id="UP000001935">
    <property type="component" value="Chromosome"/>
</dbReference>
<dbReference type="GO" id="GO:0005829">
    <property type="term" value="C:cytosol"/>
    <property type="evidence" value="ECO:0007669"/>
    <property type="project" value="TreeGrafter"/>
</dbReference>
<dbReference type="GO" id="GO:0097367">
    <property type="term" value="F:carbohydrate derivative binding"/>
    <property type="evidence" value="ECO:0007669"/>
    <property type="project" value="InterPro"/>
</dbReference>
<dbReference type="GO" id="GO:0004347">
    <property type="term" value="F:glucose-6-phosphate isomerase activity"/>
    <property type="evidence" value="ECO:0007669"/>
    <property type="project" value="UniProtKB-UniRule"/>
</dbReference>
<dbReference type="GO" id="GO:0048029">
    <property type="term" value="F:monosaccharide binding"/>
    <property type="evidence" value="ECO:0007669"/>
    <property type="project" value="TreeGrafter"/>
</dbReference>
<dbReference type="GO" id="GO:0006094">
    <property type="term" value="P:gluconeogenesis"/>
    <property type="evidence" value="ECO:0007669"/>
    <property type="project" value="UniProtKB-UniRule"/>
</dbReference>
<dbReference type="GO" id="GO:0051156">
    <property type="term" value="P:glucose 6-phosphate metabolic process"/>
    <property type="evidence" value="ECO:0007669"/>
    <property type="project" value="TreeGrafter"/>
</dbReference>
<dbReference type="GO" id="GO:0006096">
    <property type="term" value="P:glycolytic process"/>
    <property type="evidence" value="ECO:0007669"/>
    <property type="project" value="UniProtKB-UniRule"/>
</dbReference>
<dbReference type="CDD" id="cd05015">
    <property type="entry name" value="SIS_PGI_1"/>
    <property type="match status" value="1"/>
</dbReference>
<dbReference type="CDD" id="cd05016">
    <property type="entry name" value="SIS_PGI_2"/>
    <property type="match status" value="1"/>
</dbReference>
<dbReference type="FunFam" id="1.10.1390.10:FF:000001">
    <property type="entry name" value="Glucose-6-phosphate isomerase"/>
    <property type="match status" value="1"/>
</dbReference>
<dbReference type="FunFam" id="3.40.50.10490:FF:000018">
    <property type="entry name" value="Glucose-6-phosphate isomerase"/>
    <property type="match status" value="1"/>
</dbReference>
<dbReference type="Gene3D" id="1.10.1390.10">
    <property type="match status" value="1"/>
</dbReference>
<dbReference type="Gene3D" id="3.40.50.10490">
    <property type="entry name" value="Glucose-6-phosphate isomerase like protein, domain 1"/>
    <property type="match status" value="2"/>
</dbReference>
<dbReference type="HAMAP" id="MF_00473">
    <property type="entry name" value="G6P_isomerase"/>
    <property type="match status" value="1"/>
</dbReference>
<dbReference type="InterPro" id="IPR001672">
    <property type="entry name" value="G6P_Isomerase"/>
</dbReference>
<dbReference type="InterPro" id="IPR023096">
    <property type="entry name" value="G6P_Isomerase_C"/>
</dbReference>
<dbReference type="InterPro" id="IPR018189">
    <property type="entry name" value="Phosphoglucose_isomerase_CS"/>
</dbReference>
<dbReference type="InterPro" id="IPR046348">
    <property type="entry name" value="SIS_dom_sf"/>
</dbReference>
<dbReference type="InterPro" id="IPR035476">
    <property type="entry name" value="SIS_PGI_1"/>
</dbReference>
<dbReference type="InterPro" id="IPR035482">
    <property type="entry name" value="SIS_PGI_2"/>
</dbReference>
<dbReference type="NCBIfam" id="NF001211">
    <property type="entry name" value="PRK00179.1"/>
    <property type="match status" value="1"/>
</dbReference>
<dbReference type="PANTHER" id="PTHR11469">
    <property type="entry name" value="GLUCOSE-6-PHOSPHATE ISOMERASE"/>
    <property type="match status" value="1"/>
</dbReference>
<dbReference type="PANTHER" id="PTHR11469:SF1">
    <property type="entry name" value="GLUCOSE-6-PHOSPHATE ISOMERASE"/>
    <property type="match status" value="1"/>
</dbReference>
<dbReference type="Pfam" id="PF00342">
    <property type="entry name" value="PGI"/>
    <property type="match status" value="1"/>
</dbReference>
<dbReference type="PRINTS" id="PR00662">
    <property type="entry name" value="G6PISOMERASE"/>
</dbReference>
<dbReference type="SUPFAM" id="SSF53697">
    <property type="entry name" value="SIS domain"/>
    <property type="match status" value="1"/>
</dbReference>
<dbReference type="PROSITE" id="PS00765">
    <property type="entry name" value="P_GLUCOSE_ISOMERASE_1"/>
    <property type="match status" value="1"/>
</dbReference>
<dbReference type="PROSITE" id="PS00174">
    <property type="entry name" value="P_GLUCOSE_ISOMERASE_2"/>
    <property type="match status" value="1"/>
</dbReference>
<dbReference type="PROSITE" id="PS51463">
    <property type="entry name" value="P_GLUCOSE_ISOMERASE_3"/>
    <property type="match status" value="1"/>
</dbReference>
<proteinExistence type="inferred from homology"/>
<accession>Q2IE39</accession>
<name>G6PI_ANADE</name>